<name>YAFQ_ECOLI</name>
<dbReference type="EC" id="3.1.-.-"/>
<dbReference type="EMBL" id="D38582">
    <property type="protein sequence ID" value="BAA07587.1"/>
    <property type="molecule type" value="Genomic_DNA"/>
</dbReference>
<dbReference type="EMBL" id="U00096">
    <property type="protein sequence ID" value="AAC73329.1"/>
    <property type="molecule type" value="Genomic_DNA"/>
</dbReference>
<dbReference type="EMBL" id="AP009048">
    <property type="protein sequence ID" value="BAA77895.1"/>
    <property type="molecule type" value="Genomic_DNA"/>
</dbReference>
<dbReference type="PIR" id="B64747">
    <property type="entry name" value="B64747"/>
</dbReference>
<dbReference type="RefSeq" id="NP_414760.1">
    <property type="nucleotide sequence ID" value="NC_000913.3"/>
</dbReference>
<dbReference type="RefSeq" id="WP_000615983.1">
    <property type="nucleotide sequence ID" value="NZ_SSZK01000029.1"/>
</dbReference>
<dbReference type="PDB" id="4Q2U">
    <property type="method" value="X-ray"/>
    <property type="resolution" value="1.80 A"/>
    <property type="chains" value="B/D/F/H/J/L/N/P=2-92"/>
</dbReference>
<dbReference type="PDBsum" id="4Q2U"/>
<dbReference type="SMR" id="Q47149"/>
<dbReference type="BioGRID" id="4259771">
    <property type="interactions" value="17"/>
</dbReference>
<dbReference type="BioGRID" id="849310">
    <property type="interactions" value="1"/>
</dbReference>
<dbReference type="ComplexPortal" id="CPX-1079">
    <property type="entry name" value="DinJ-YafQ toxin-antitoxin complex"/>
</dbReference>
<dbReference type="DIP" id="DIP-11221N"/>
<dbReference type="FunCoup" id="Q47149">
    <property type="interactions" value="15"/>
</dbReference>
<dbReference type="IntAct" id="Q47149">
    <property type="interactions" value="4"/>
</dbReference>
<dbReference type="STRING" id="511145.b0225"/>
<dbReference type="PaxDb" id="511145-b0225"/>
<dbReference type="EnsemblBacteria" id="AAC73329">
    <property type="protein sequence ID" value="AAC73329"/>
    <property type="gene ID" value="b0225"/>
</dbReference>
<dbReference type="GeneID" id="944911"/>
<dbReference type="KEGG" id="ecj:JW0215"/>
<dbReference type="KEGG" id="eco:b0225"/>
<dbReference type="KEGG" id="ecoc:C3026_01065"/>
<dbReference type="KEGG" id="ecoc:C3026_23805"/>
<dbReference type="PATRIC" id="fig|1411691.4.peg.2058"/>
<dbReference type="EchoBASE" id="EB2948"/>
<dbReference type="eggNOG" id="COG3041">
    <property type="taxonomic scope" value="Bacteria"/>
</dbReference>
<dbReference type="HOGENOM" id="CLU_161929_4_1_6"/>
<dbReference type="InParanoid" id="Q47149"/>
<dbReference type="OMA" id="HRECHIK"/>
<dbReference type="OrthoDB" id="7030467at2"/>
<dbReference type="PhylomeDB" id="Q47149"/>
<dbReference type="BioCyc" id="EcoCyc:G6109-MONOMER"/>
<dbReference type="BioCyc" id="MetaCyc:G6109-MONOMER"/>
<dbReference type="EvolutionaryTrace" id="Q47149"/>
<dbReference type="PRO" id="PR:Q47149"/>
<dbReference type="Proteomes" id="UP000000625">
    <property type="component" value="Chromosome"/>
</dbReference>
<dbReference type="CollecTF" id="EXPREG_00000de0"/>
<dbReference type="GO" id="GO:0110001">
    <property type="term" value="C:toxin-antitoxin complex"/>
    <property type="evidence" value="ECO:0000353"/>
    <property type="project" value="ComplexPortal"/>
</dbReference>
<dbReference type="GO" id="GO:0003677">
    <property type="term" value="F:DNA binding"/>
    <property type="evidence" value="ECO:0007669"/>
    <property type="project" value="UniProtKB-KW"/>
</dbReference>
<dbReference type="GO" id="GO:0043022">
    <property type="term" value="F:ribosome binding"/>
    <property type="evidence" value="ECO:0000314"/>
    <property type="project" value="EcoCyc"/>
</dbReference>
<dbReference type="GO" id="GO:0003723">
    <property type="term" value="F:RNA binding"/>
    <property type="evidence" value="ECO:0007669"/>
    <property type="project" value="UniProtKB-KW"/>
</dbReference>
<dbReference type="GO" id="GO:0004521">
    <property type="term" value="F:RNA endonuclease activity"/>
    <property type="evidence" value="ECO:0000314"/>
    <property type="project" value="EcoCyc"/>
</dbReference>
<dbReference type="GO" id="GO:0016892">
    <property type="term" value="F:RNA endonuclease activity, producing 3'-phosphomonoesters"/>
    <property type="evidence" value="ECO:0000314"/>
    <property type="project" value="EcoCyc"/>
</dbReference>
<dbReference type="GO" id="GO:0006402">
    <property type="term" value="P:mRNA catabolic process"/>
    <property type="evidence" value="ECO:0000314"/>
    <property type="project" value="EcoCyc"/>
</dbReference>
<dbReference type="GO" id="GO:0045892">
    <property type="term" value="P:negative regulation of DNA-templated transcription"/>
    <property type="evidence" value="ECO:0000314"/>
    <property type="project" value="ComplexPortal"/>
</dbReference>
<dbReference type="GO" id="GO:0040008">
    <property type="term" value="P:regulation of growth"/>
    <property type="evidence" value="ECO:0000303"/>
    <property type="project" value="ComplexPortal"/>
</dbReference>
<dbReference type="GO" id="GO:0046677">
    <property type="term" value="P:response to antibiotic"/>
    <property type="evidence" value="ECO:0000315"/>
    <property type="project" value="EcoCyc"/>
</dbReference>
<dbReference type="GO" id="GO:0044010">
    <property type="term" value="P:single-species biofilm formation"/>
    <property type="evidence" value="ECO:0000314"/>
    <property type="project" value="ComplexPortal"/>
</dbReference>
<dbReference type="GO" id="GO:0006415">
    <property type="term" value="P:translational termination"/>
    <property type="evidence" value="ECO:0000314"/>
    <property type="project" value="EcoCyc"/>
</dbReference>
<dbReference type="FunFam" id="3.30.2310.20:FF:000003">
    <property type="entry name" value="Type II toxin-antitoxin system YafQ family toxin"/>
    <property type="match status" value="1"/>
</dbReference>
<dbReference type="Gene3D" id="3.30.2310.20">
    <property type="entry name" value="RelE-like"/>
    <property type="match status" value="1"/>
</dbReference>
<dbReference type="InterPro" id="IPR007712">
    <property type="entry name" value="RelE/ParE_toxin"/>
</dbReference>
<dbReference type="InterPro" id="IPR035093">
    <property type="entry name" value="RelE/ParE_toxin_dom_sf"/>
</dbReference>
<dbReference type="InterPro" id="IPR004386">
    <property type="entry name" value="Toxin_YafQ-like"/>
</dbReference>
<dbReference type="NCBIfam" id="TIGR02385">
    <property type="entry name" value="RelE_StbE"/>
    <property type="match status" value="1"/>
</dbReference>
<dbReference type="NCBIfam" id="TIGR00053">
    <property type="entry name" value="YafQ family addiction module toxin"/>
    <property type="match status" value="1"/>
</dbReference>
<dbReference type="PANTHER" id="PTHR40588">
    <property type="entry name" value="MRNA INTERFERASE TOXIN YAFQ"/>
    <property type="match status" value="1"/>
</dbReference>
<dbReference type="PANTHER" id="PTHR40588:SF1">
    <property type="entry name" value="MRNA INTERFERASE TOXIN YAFQ"/>
    <property type="match status" value="1"/>
</dbReference>
<dbReference type="Pfam" id="PF15738">
    <property type="entry name" value="YafQ_toxin"/>
    <property type="match status" value="1"/>
</dbReference>
<dbReference type="PIRSF" id="PIRSF006156">
    <property type="entry name" value="YafQ"/>
    <property type="match status" value="1"/>
</dbReference>
<dbReference type="SUPFAM" id="SSF143011">
    <property type="entry name" value="RelE-like"/>
    <property type="match status" value="1"/>
</dbReference>
<reference key="1">
    <citation type="journal article" date="1995" name="Mutat. Res.">
        <title>dinP, a new gene in Escherichia coli, whose product shows similarities to UmuC and its homologues.</title>
        <authorList>
            <person name="Ohmori H."/>
            <person name="Hatada E."/>
            <person name="Qiao Y."/>
            <person name="Tsuji M."/>
            <person name="Fukuda R."/>
        </authorList>
    </citation>
    <scope>NUCLEOTIDE SEQUENCE [GENOMIC DNA]</scope>
    <source>
        <strain>K12 / W3110 / ATCC 27325 / DSM 5911</strain>
    </source>
</reference>
<reference key="2">
    <citation type="submission" date="1996-02" db="EMBL/GenBank/DDBJ databases">
        <title>Systematic sequencing of the Escherichia coli genome: analysis of the 4.0 - 6.0 min (189,987 - 281,416bp) region.</title>
        <authorList>
            <person name="Takemoto K."/>
            <person name="Mori H."/>
            <person name="Murayama N."/>
            <person name="Kataoka K."/>
            <person name="Yano M."/>
            <person name="Itoh T."/>
            <person name="Yamamoto Y."/>
            <person name="Inokuchi H."/>
            <person name="Miki T."/>
            <person name="Hatada E."/>
            <person name="Fukuda R."/>
            <person name="Ichihara S."/>
            <person name="Mizuno T."/>
            <person name="Makino K."/>
            <person name="Nakata A."/>
            <person name="Yura T."/>
            <person name="Sampei G."/>
            <person name="Mizobuchi K."/>
        </authorList>
    </citation>
    <scope>NUCLEOTIDE SEQUENCE [LARGE SCALE GENOMIC DNA]</scope>
    <source>
        <strain>K12 / W3110 / ATCC 27325 / DSM 5911</strain>
    </source>
</reference>
<reference key="3">
    <citation type="journal article" date="1997" name="Science">
        <title>The complete genome sequence of Escherichia coli K-12.</title>
        <authorList>
            <person name="Blattner F.R."/>
            <person name="Plunkett G. III"/>
            <person name="Bloch C.A."/>
            <person name="Perna N.T."/>
            <person name="Burland V."/>
            <person name="Riley M."/>
            <person name="Collado-Vides J."/>
            <person name="Glasner J.D."/>
            <person name="Rode C.K."/>
            <person name="Mayhew G.F."/>
            <person name="Gregor J."/>
            <person name="Davis N.W."/>
            <person name="Kirkpatrick H.A."/>
            <person name="Goeden M.A."/>
            <person name="Rose D.J."/>
            <person name="Mau B."/>
            <person name="Shao Y."/>
        </authorList>
    </citation>
    <scope>NUCLEOTIDE SEQUENCE [LARGE SCALE GENOMIC DNA]</scope>
    <source>
        <strain>K12 / MG1655 / ATCC 47076</strain>
    </source>
</reference>
<reference key="4">
    <citation type="journal article" date="2006" name="Mol. Syst. Biol.">
        <title>Highly accurate genome sequences of Escherichia coli K-12 strains MG1655 and W3110.</title>
        <authorList>
            <person name="Hayashi K."/>
            <person name="Morooka N."/>
            <person name="Yamamoto Y."/>
            <person name="Fujita K."/>
            <person name="Isono K."/>
            <person name="Choi S."/>
            <person name="Ohtsubo E."/>
            <person name="Baba T."/>
            <person name="Wanner B.L."/>
            <person name="Mori H."/>
            <person name="Horiuchi T."/>
        </authorList>
    </citation>
    <scope>NUCLEOTIDE SEQUENCE [LARGE SCALE GENOMIC DNA]</scope>
    <source>
        <strain>K12 / W3110 / ATCC 27325 / DSM 5911</strain>
    </source>
</reference>
<reference key="5">
    <citation type="journal article" date="2007" name="FEMS Microbiol. Lett.">
        <title>Escherichia coli dinJ-yafQ genes act as a toxin-antitoxin module.</title>
        <authorList>
            <person name="Motiejunaite R."/>
            <person name="Armalyte J."/>
            <person name="Markuckas A."/>
            <person name="Suziedeliene E."/>
        </authorList>
    </citation>
    <scope>FUNCTION AS A TOXIN</scope>
    <scope>SUBUNIT</scope>
    <source>
        <strain>K12 / BW25113</strain>
    </source>
</reference>
<reference key="6">
    <citation type="journal article" date="2009" name="Antimicrob. Agents Chemother.">
        <title>The chromosomal toxin gene yafQ is a determinant of multidrug tolerance for Escherichia coli growing in a biofilm.</title>
        <authorList>
            <person name="Harrison J.J."/>
            <person name="Wade W.D."/>
            <person name="Akierman S."/>
            <person name="Vacchi-Suzzi C."/>
            <person name="Stremick C.A."/>
            <person name="Turner R.J."/>
            <person name="Ceri H."/>
        </authorList>
    </citation>
    <scope>DISRUPTION PHENOTYPE</scope>
    <scope>FUNCTION IN ANTIBIOTIC TOLERANCE IN BIOFILM</scope>
    <source>
        <strain>K12 / BW25113</strain>
    </source>
</reference>
<reference key="7">
    <citation type="journal article" date="2009" name="Mol. Microbiol.">
        <title>Bacterial toxin YafQ is an endoribonuclease that associates with the ribosome and blocks translation elongation through sequence-specific and frame-dependent mRNA cleavage.</title>
        <authorList>
            <person name="Prysak M.H."/>
            <person name="Mozdzierz C.J."/>
            <person name="Cook A.M."/>
            <person name="Zhu L."/>
            <person name="Zhang Y."/>
            <person name="Inouye M."/>
            <person name="Woychik N.A."/>
        </authorList>
    </citation>
    <scope>FUNCTION AS AN MRNA INTERFERASE</scope>
    <scope>ENDORIBONUCLEASE ACTIVITY</scope>
    <scope>PROBABLE ACTIVE SITE</scope>
    <scope>RNA SEQUENCE SPECIFICITY</scope>
    <scope>SUBUNIT</scope>
    <scope>LARGE RIBOSOMAL SUBUNIT-BINDING</scope>
    <scope>DNA-BINDING</scope>
    <scope>INDUCTION</scope>
    <scope>MUTAGENESIS OF HIS-87</scope>
    <source>
        <strain>K12 / BW25113</strain>
        <strain>K12 / DH5-alpha</strain>
    </source>
</reference>
<reference key="8">
    <citation type="journal article" date="2009" name="PLoS ONE">
        <title>A differential effect of E. coli toxin-antitoxin systems on cell death in liquid media and biofilm formation.</title>
        <authorList>
            <person name="Kolodkin-Gal I."/>
            <person name="Verdiger R."/>
            <person name="Shlosberg-Fedida A."/>
            <person name="Engelberg-Kulka H."/>
        </authorList>
    </citation>
    <scope>FUNCTION IN BIOFILM FORMATION</scope>
    <scope>DEVELOPMENTAL STAGE</scope>
    <scope>DISRUPTION PHENOTYPE</scope>
    <source>
        <strain>K12 / MC4100 / ATCC 35695 / DSM 6574</strain>
    </source>
</reference>
<reference key="9">
    <citation type="journal article" date="2011" name="Proc. Natl. Acad. Sci. U.S.A.">
        <title>Bacterial persistence by RNA endonucleases.</title>
        <authorList>
            <person name="Maisonneuve E."/>
            <person name="Shakespeare L.J."/>
            <person name="Joergensen M.G."/>
            <person name="Gerdes K."/>
        </authorList>
    </citation>
    <scope>RETRACTED PAPER</scope>
    <source>
        <strain>K12 / MG1655 / ATCC 47076</strain>
    </source>
</reference>
<reference key="10">
    <citation type="journal article" date="2018" name="Proc. Natl. Acad. Sci. U.S.A.">
        <authorList>
            <person name="Maisonneuve E."/>
            <person name="Shakespeare L.J."/>
            <person name="Joergensen M.G."/>
            <person name="Gerdes K."/>
        </authorList>
    </citation>
    <scope>RETRACTION NOTICE OF PUBMED:21788497</scope>
</reference>
<reference evidence="7" key="11">
    <citation type="journal article" date="2014" name="J. Biol. Chem.">
        <title>Mechanisms of toxin inhibition and transcriptional repression by Escherichia coli DinJ-YafQ.</title>
        <authorList>
            <person name="Ruangprasert A."/>
            <person name="Maehigashi T."/>
            <person name="Miles S.J."/>
            <person name="Giridharan N."/>
            <person name="Liu J.X."/>
            <person name="Dunham C.M."/>
        </authorList>
    </citation>
    <scope>X-RAY CRYSTALLOGRAPHY (1.80 ANGSTROMS) OF 2-92</scope>
    <scope>FUNCTION</scope>
    <scope>SUBUNIT</scope>
</reference>
<gene>
    <name type="primary">yafQ</name>
    <name type="ordered locus">b0225</name>
    <name type="ordered locus">JW0215</name>
</gene>
<organism>
    <name type="scientific">Escherichia coli (strain K12)</name>
    <dbReference type="NCBI Taxonomy" id="83333"/>
    <lineage>
        <taxon>Bacteria</taxon>
        <taxon>Pseudomonadati</taxon>
        <taxon>Pseudomonadota</taxon>
        <taxon>Gammaproteobacteria</taxon>
        <taxon>Enterobacterales</taxon>
        <taxon>Enterobacteriaceae</taxon>
        <taxon>Escherichia</taxon>
    </lineage>
</organism>
<proteinExistence type="evidence at protein level"/>
<feature type="chain" id="PRO_0000168540" description="mRNA interferase toxin YafQ">
    <location>
        <begin position="1"/>
        <end position="92"/>
    </location>
</feature>
<feature type="active site" description="Proton donor" evidence="6">
    <location>
        <position position="87"/>
    </location>
</feature>
<feature type="mutagenesis site" description="Loss of mRNA cleavage, loss of toxic effect. Still associates with the ribosome." evidence="2">
    <original>H</original>
    <variation>Q</variation>
    <location>
        <position position="87"/>
    </location>
</feature>
<feature type="strand" evidence="8">
    <location>
        <begin position="5"/>
        <end position="9"/>
    </location>
</feature>
<feature type="helix" evidence="8">
    <location>
        <begin position="10"/>
        <end position="21"/>
    </location>
</feature>
<feature type="helix" evidence="8">
    <location>
        <begin position="26"/>
        <end position="37"/>
    </location>
</feature>
<feature type="helix" evidence="8">
    <location>
        <begin position="45"/>
        <end position="47"/>
    </location>
</feature>
<feature type="strand" evidence="8">
    <location>
        <begin position="53"/>
        <end position="55"/>
    </location>
</feature>
<feature type="strand" evidence="8">
    <location>
        <begin position="59"/>
        <end position="65"/>
    </location>
</feature>
<feature type="strand" evidence="8">
    <location>
        <begin position="68"/>
        <end position="74"/>
    </location>
</feature>
<feature type="strand" evidence="8">
    <location>
        <begin position="76"/>
        <end position="85"/>
    </location>
</feature>
<feature type="helix" evidence="8">
    <location>
        <begin position="87"/>
        <end position="91"/>
    </location>
</feature>
<sequence>MIQRDIEYSGQYSKDVKLAQKRHKDMNKLKYLMTLLINNTLPLPAVYKDHPLQGSWKGYRDAHVEPDWILIYKLTDKLLRFERTGTHAALFG</sequence>
<keyword id="KW-0002">3D-structure</keyword>
<keyword id="KW-0238">DNA-binding</keyword>
<keyword id="KW-0255">Endonuclease</keyword>
<keyword id="KW-0378">Hydrolase</keyword>
<keyword id="KW-0540">Nuclease</keyword>
<keyword id="KW-1185">Reference proteome</keyword>
<keyword id="KW-0678">Repressor</keyword>
<keyword id="KW-0694">RNA-binding</keyword>
<keyword id="KW-1277">Toxin-antitoxin system</keyword>
<keyword id="KW-0804">Transcription</keyword>
<keyword id="KW-0805">Transcription regulation</keyword>
<evidence type="ECO:0000269" key="1">
    <source>
    </source>
</evidence>
<evidence type="ECO:0000269" key="2">
    <source>
    </source>
</evidence>
<evidence type="ECO:0000269" key="3">
    <source>
    </source>
</evidence>
<evidence type="ECO:0000269" key="4">
    <source>
    </source>
</evidence>
<evidence type="ECO:0000269" key="5">
    <source>
    </source>
</evidence>
<evidence type="ECO:0000305" key="6"/>
<evidence type="ECO:0007744" key="7">
    <source>
        <dbReference type="PDB" id="4Q2U"/>
    </source>
</evidence>
<evidence type="ECO:0007829" key="8">
    <source>
        <dbReference type="PDB" id="4Q2U"/>
    </source>
</evidence>
<protein>
    <recommendedName>
        <fullName>mRNA interferase toxin YafQ</fullName>
        <ecNumber>3.1.-.-</ecNumber>
    </recommendedName>
    <alternativeName>
        <fullName>Endoribonuclease YafQ</fullName>
    </alternativeName>
    <alternativeName>
        <fullName>Toxin YafQ</fullName>
    </alternativeName>
</protein>
<comment type="function">
    <text evidence="1 2 5">Toxic component of a type II toxin-antitoxin (TA) system (PubMed:17263853). A sequence-specific mRNA endoribonuclease that inhibits translation elongation and induces bacterial stasis (PubMed:19210620). Cleavage occurs between the second and third residue of the Lys codon followed by a G or A (5'AAA(G/A)3'), is reading-frame dependent and occurs within the 5' end of most mRNAs (PubMed:19210620). Ribosome-binding confers the sequence specificity and reading frame-dependence (PubMed:19210620). When overexpressed in liquid media YafQ partially inhibits protein synthesis, with a reduction in growth rate and colony growth rate. This effect is counteracted by coexpression with cognate antitoxin DinJ (PubMed:17263853). YafQ and DinJ together bind their own promoter, and repress its expression (PubMed:24898247).</text>
</comment>
<comment type="function">
    <text evidence="4">Cell death governed by the MazE-MazF and DinJ-YafQ TA systems seems to play a role in biofilm formation (PubMed:19707553).</text>
</comment>
<comment type="subunit">
    <text evidence="1 2 5">Monomer in the absence of antitoxin (PubMed:24898247). Forms a heterotetramer with antitoxin DinJ, with 2 YafQ-DinJ dimers associated via the N-terminus of the DinJ antitoxins (YafQ-(DinJ)2-YafQ) (PubMed:17263853, PubMed:24898247). In this complex the toxin activity is inhibited. Binds the 70S ribosome via the 50S ribosomal subunit (PubMed:19210620).</text>
</comment>
<comment type="developmental stage">
    <text evidence="4">May function as a drug tolerance determinant in biofilm, but not stationary phase planktonic cells.</text>
</comment>
<comment type="induction">
    <text evidence="2">By the DNA damaging agent mitomycin C.</text>
</comment>
<comment type="disruption phenotype">
    <text evidence="3 4">Cells missing yafQ show increased biofilm sensitivity to the antibiotics cefazolin (a beta-lactam inhibitor) and tobramycin (a protein synthesis inhibitor). There is no difference in antibiotic sensitivity in stationary phase planktonic cells (PubMed:19307375).</text>
</comment>
<comment type="similarity">
    <text evidence="6">Belongs to the RelE toxin family. YafQ subfamily.</text>
</comment>
<accession>Q47149</accession>